<feature type="chain" id="PRO_0000367165" description="UPF0173 metal-dependent hydrolase BAbS19_II06020">
    <location>
        <begin position="1"/>
        <end position="237"/>
    </location>
</feature>
<keyword id="KW-0378">Hydrolase</keyword>
<accession>B2SB60</accession>
<sequence length="237" mass="25124">MKITWLGHAAFRVETAKAVILIDPFLNGNPGAKGIDFKEATRGVTHIALTHGHGDHVGDTVAIAREHGATVIANADLASWLGSQGVEKLDPGNTGGTLAHEGFTITFVNALHSSAMLTENGVSQALGNPNGLVFHFEDSPTLYHMGDTDIFSDMALINELHQPEIGIVPIGDRFTMGGAVAALACQRYFNFNSVLPCHYASFPIIDRTADKFIAGMADHPATKVLADPAGTVHSFQA</sequence>
<protein>
    <recommendedName>
        <fullName evidence="1">UPF0173 metal-dependent hydrolase BAbS19_II06020</fullName>
    </recommendedName>
</protein>
<dbReference type="EMBL" id="CP000888">
    <property type="protein sequence ID" value="ACD74097.1"/>
    <property type="molecule type" value="Genomic_DNA"/>
</dbReference>
<dbReference type="RefSeq" id="WP_002971239.1">
    <property type="nucleotide sequence ID" value="NC_010740.1"/>
</dbReference>
<dbReference type="SMR" id="B2SB60"/>
<dbReference type="KEGG" id="bmc:BAbS19_II06020"/>
<dbReference type="HOGENOM" id="CLU_070010_4_0_5"/>
<dbReference type="Proteomes" id="UP000002565">
    <property type="component" value="Chromosome 2"/>
</dbReference>
<dbReference type="GO" id="GO:0016787">
    <property type="term" value="F:hydrolase activity"/>
    <property type="evidence" value="ECO:0007669"/>
    <property type="project" value="UniProtKB-UniRule"/>
</dbReference>
<dbReference type="CDD" id="cd06262">
    <property type="entry name" value="metallo-hydrolase-like_MBL-fold"/>
    <property type="match status" value="1"/>
</dbReference>
<dbReference type="Gene3D" id="3.60.15.10">
    <property type="entry name" value="Ribonuclease Z/Hydroxyacylglutathione hydrolase-like"/>
    <property type="match status" value="1"/>
</dbReference>
<dbReference type="HAMAP" id="MF_00457">
    <property type="entry name" value="UPF0173"/>
    <property type="match status" value="1"/>
</dbReference>
<dbReference type="InterPro" id="IPR001279">
    <property type="entry name" value="Metallo-B-lactamas"/>
</dbReference>
<dbReference type="InterPro" id="IPR036866">
    <property type="entry name" value="RibonucZ/Hydroxyglut_hydro"/>
</dbReference>
<dbReference type="InterPro" id="IPR022877">
    <property type="entry name" value="UPF0173"/>
</dbReference>
<dbReference type="InterPro" id="IPR050114">
    <property type="entry name" value="UPF0173_UPF0282_UlaG_hydrolase"/>
</dbReference>
<dbReference type="NCBIfam" id="NF001911">
    <property type="entry name" value="PRK00685.1"/>
    <property type="match status" value="1"/>
</dbReference>
<dbReference type="PANTHER" id="PTHR43546:SF3">
    <property type="entry name" value="UPF0173 METAL-DEPENDENT HYDROLASE MJ1163"/>
    <property type="match status" value="1"/>
</dbReference>
<dbReference type="PANTHER" id="PTHR43546">
    <property type="entry name" value="UPF0173 METAL-DEPENDENT HYDROLASE MJ1163-RELATED"/>
    <property type="match status" value="1"/>
</dbReference>
<dbReference type="Pfam" id="PF13483">
    <property type="entry name" value="Lactamase_B_3"/>
    <property type="match status" value="1"/>
</dbReference>
<dbReference type="SMART" id="SM00849">
    <property type="entry name" value="Lactamase_B"/>
    <property type="match status" value="1"/>
</dbReference>
<dbReference type="SUPFAM" id="SSF56281">
    <property type="entry name" value="Metallo-hydrolase/oxidoreductase"/>
    <property type="match status" value="1"/>
</dbReference>
<reference key="1">
    <citation type="journal article" date="2008" name="PLoS ONE">
        <title>Genome sequence of Brucella abortus vaccine strain S19 compared to virulent strains yields candidate virulence genes.</title>
        <authorList>
            <person name="Crasta O.R."/>
            <person name="Folkerts O."/>
            <person name="Fei Z."/>
            <person name="Mane S.P."/>
            <person name="Evans C."/>
            <person name="Martino-Catt S."/>
            <person name="Bricker B."/>
            <person name="Yu G."/>
            <person name="Du L."/>
            <person name="Sobral B.W."/>
        </authorList>
    </citation>
    <scope>NUCLEOTIDE SEQUENCE [LARGE SCALE GENOMIC DNA]</scope>
    <source>
        <strain>S19</strain>
    </source>
</reference>
<evidence type="ECO:0000255" key="1">
    <source>
        <dbReference type="HAMAP-Rule" id="MF_00457"/>
    </source>
</evidence>
<name>Y6020_BRUA1</name>
<proteinExistence type="inferred from homology"/>
<comment type="similarity">
    <text evidence="1">Belongs to the UPF0173 family.</text>
</comment>
<gene>
    <name type="ordered locus">BAbS19_II06020</name>
</gene>
<organism>
    <name type="scientific">Brucella abortus (strain S19)</name>
    <dbReference type="NCBI Taxonomy" id="430066"/>
    <lineage>
        <taxon>Bacteria</taxon>
        <taxon>Pseudomonadati</taxon>
        <taxon>Pseudomonadota</taxon>
        <taxon>Alphaproteobacteria</taxon>
        <taxon>Hyphomicrobiales</taxon>
        <taxon>Brucellaceae</taxon>
        <taxon>Brucella/Ochrobactrum group</taxon>
        <taxon>Brucella</taxon>
    </lineage>
</organism>